<proteinExistence type="inferred from homology"/>
<gene>
    <name evidence="1" type="primary">rpsR2</name>
    <name type="ordered locus">MT2116</name>
</gene>
<feature type="chain" id="PRO_0000428250" description="Small ribosomal subunit protein bS18B">
    <location>
        <begin position="1"/>
        <end position="88"/>
    </location>
</feature>
<reference key="1">
    <citation type="journal article" date="2002" name="J. Bacteriol.">
        <title>Whole-genome comparison of Mycobacterium tuberculosis clinical and laboratory strains.</title>
        <authorList>
            <person name="Fleischmann R.D."/>
            <person name="Alland D."/>
            <person name="Eisen J.A."/>
            <person name="Carpenter L."/>
            <person name="White O."/>
            <person name="Peterson J.D."/>
            <person name="DeBoy R.T."/>
            <person name="Dodson R.J."/>
            <person name="Gwinn M.L."/>
            <person name="Haft D.H."/>
            <person name="Hickey E.K."/>
            <person name="Kolonay J.F."/>
            <person name="Nelson W.C."/>
            <person name="Umayam L.A."/>
            <person name="Ermolaeva M.D."/>
            <person name="Salzberg S.L."/>
            <person name="Delcher A."/>
            <person name="Utterback T.R."/>
            <person name="Weidman J.F."/>
            <person name="Khouri H.M."/>
            <person name="Gill J."/>
            <person name="Mikula A."/>
            <person name="Bishai W."/>
            <person name="Jacobs W.R. Jr."/>
            <person name="Venter J.C."/>
            <person name="Fraser C.M."/>
        </authorList>
    </citation>
    <scope>NUCLEOTIDE SEQUENCE [LARGE SCALE GENOMIC DNA]</scope>
    <source>
        <strain>CDC 1551 / Oshkosh</strain>
    </source>
</reference>
<organism>
    <name type="scientific">Mycobacterium tuberculosis (strain CDC 1551 / Oshkosh)</name>
    <dbReference type="NCBI Taxonomy" id="83331"/>
    <lineage>
        <taxon>Bacteria</taxon>
        <taxon>Bacillati</taxon>
        <taxon>Actinomycetota</taxon>
        <taxon>Actinomycetes</taxon>
        <taxon>Mycobacteriales</taxon>
        <taxon>Mycobacteriaceae</taxon>
        <taxon>Mycobacterium</taxon>
        <taxon>Mycobacterium tuberculosis complex</taxon>
    </lineage>
</organism>
<protein>
    <recommendedName>
        <fullName evidence="1">Small ribosomal subunit protein bS18B</fullName>
    </recommendedName>
    <alternativeName>
        <fullName evidence="2">30S ribosomal protein S18 2</fullName>
    </alternativeName>
</protein>
<dbReference type="EMBL" id="AE000516">
    <property type="protein sequence ID" value="AAK46395.1"/>
    <property type="molecule type" value="Genomic_DNA"/>
</dbReference>
<dbReference type="PIR" id="F70945">
    <property type="entry name" value="F70945"/>
</dbReference>
<dbReference type="SMR" id="P9WH46"/>
<dbReference type="KEGG" id="mtc:MT2116"/>
<dbReference type="PATRIC" id="fig|83331.31.peg.2282"/>
<dbReference type="HOGENOM" id="CLU_148710_1_0_11"/>
<dbReference type="Proteomes" id="UP000001020">
    <property type="component" value="Chromosome"/>
</dbReference>
<dbReference type="GO" id="GO:0022627">
    <property type="term" value="C:cytosolic small ribosomal subunit"/>
    <property type="evidence" value="ECO:0007669"/>
    <property type="project" value="TreeGrafter"/>
</dbReference>
<dbReference type="GO" id="GO:0070181">
    <property type="term" value="F:small ribosomal subunit rRNA binding"/>
    <property type="evidence" value="ECO:0007669"/>
    <property type="project" value="TreeGrafter"/>
</dbReference>
<dbReference type="GO" id="GO:0003735">
    <property type="term" value="F:structural constituent of ribosome"/>
    <property type="evidence" value="ECO:0007669"/>
    <property type="project" value="InterPro"/>
</dbReference>
<dbReference type="GO" id="GO:0006412">
    <property type="term" value="P:translation"/>
    <property type="evidence" value="ECO:0007669"/>
    <property type="project" value="UniProtKB-UniRule"/>
</dbReference>
<dbReference type="FunFam" id="4.10.640.10:FF:000016">
    <property type="entry name" value="30S ribosomal protein S18"/>
    <property type="match status" value="1"/>
</dbReference>
<dbReference type="Gene3D" id="4.10.640.10">
    <property type="entry name" value="Ribosomal protein S18"/>
    <property type="match status" value="1"/>
</dbReference>
<dbReference type="HAMAP" id="MF_00270">
    <property type="entry name" value="Ribosomal_bS18"/>
    <property type="match status" value="1"/>
</dbReference>
<dbReference type="InterPro" id="IPR001648">
    <property type="entry name" value="Ribosomal_bS18"/>
</dbReference>
<dbReference type="InterPro" id="IPR018275">
    <property type="entry name" value="Ribosomal_bS18_CS"/>
</dbReference>
<dbReference type="InterPro" id="IPR036870">
    <property type="entry name" value="Ribosomal_bS18_sf"/>
</dbReference>
<dbReference type="NCBIfam" id="TIGR00165">
    <property type="entry name" value="S18"/>
    <property type="match status" value="1"/>
</dbReference>
<dbReference type="PANTHER" id="PTHR13479">
    <property type="entry name" value="30S RIBOSOMAL PROTEIN S18"/>
    <property type="match status" value="1"/>
</dbReference>
<dbReference type="PANTHER" id="PTHR13479:SF40">
    <property type="entry name" value="SMALL RIBOSOMAL SUBUNIT PROTEIN BS18M"/>
    <property type="match status" value="1"/>
</dbReference>
<dbReference type="Pfam" id="PF01084">
    <property type="entry name" value="Ribosomal_S18"/>
    <property type="match status" value="1"/>
</dbReference>
<dbReference type="PRINTS" id="PR00974">
    <property type="entry name" value="RIBOSOMALS18"/>
</dbReference>
<dbReference type="SUPFAM" id="SSF46911">
    <property type="entry name" value="Ribosomal protein S18"/>
    <property type="match status" value="1"/>
</dbReference>
<dbReference type="PROSITE" id="PS00057">
    <property type="entry name" value="RIBOSOMAL_S18"/>
    <property type="match status" value="1"/>
</dbReference>
<evidence type="ECO:0000255" key="1">
    <source>
        <dbReference type="HAMAP-Rule" id="MF_00270"/>
    </source>
</evidence>
<evidence type="ECO:0000305" key="2"/>
<sequence>MAAKSARKGPTKAKKNLLDSLGVESVDYKDTATLRVFISDRGKIRSRGVTGLTVQQQRQVAQAIKNAREMALLPYPGQDRQRRAALCP</sequence>
<keyword id="KW-1185">Reference proteome</keyword>
<keyword id="KW-0687">Ribonucleoprotein</keyword>
<keyword id="KW-0689">Ribosomal protein</keyword>
<keyword id="KW-0694">RNA-binding</keyword>
<keyword id="KW-0699">rRNA-binding</keyword>
<accession>P9WH46</accession>
<accession>L0T8N0</accession>
<accession>O86354</accession>
<accession>P66465</accession>
<name>RS182_MYCTO</name>
<comment type="function">
    <text evidence="1">Binds as a heterodimer with protein bS6 to the central domain of the 16S rRNA, where it helps stabilize the platform of the 30S subunit.</text>
</comment>
<comment type="subunit">
    <text evidence="1">Part of the 30S ribosomal subunit. Forms a tight heterodimer with protein bS6.</text>
</comment>
<comment type="similarity">
    <text evidence="1">Belongs to the bacterial ribosomal protein bS18 family.</text>
</comment>